<sequence>MRIAIIGGSGVYDPGILTNIHEERVETPYGAAVLKVGTYHGEEIGFMPRHGDKHTVPPHKVNYRANIWALKMLKVERVLATAAVGSTNPEFRPGDFVIVNDFLDFTKTRTYTFFEGGETGVVHTDFTTPYCPELGQVLVETAARLGIKAHAGGVYACTEGPRFETPAEIRMIRQLGGDLVGMTNVPEVVLAHEVGLCYGLIAMVTNMAAGISSTPLSHEEVLEIMDQNGKNLRDLIMQAIPGIPRQRNCRCSLAAGKIEV</sequence>
<reference key="1">
    <citation type="journal article" date="2008" name="Environ. Microbiol.">
        <title>The complete genome sequence of Moorella thermoacetica (f. Clostridium thermoaceticum).</title>
        <authorList>
            <person name="Pierce E."/>
            <person name="Xie G."/>
            <person name="Barabote R.D."/>
            <person name="Saunders E."/>
            <person name="Han C.S."/>
            <person name="Detter J.C."/>
            <person name="Richardson P."/>
            <person name="Brettin T.S."/>
            <person name="Das A."/>
            <person name="Ljungdahl L.G."/>
            <person name="Ragsdale S.W."/>
        </authorList>
    </citation>
    <scope>NUCLEOTIDE SEQUENCE [LARGE SCALE GENOMIC DNA]</scope>
    <source>
        <strain>ATCC 39073 / JCM 9320</strain>
    </source>
</reference>
<evidence type="ECO:0000255" key="1">
    <source>
        <dbReference type="HAMAP-Rule" id="MF_01963"/>
    </source>
</evidence>
<protein>
    <recommendedName>
        <fullName evidence="1">Probable 6-oxopurine nucleoside phosphorylase</fullName>
        <ecNumber evidence="1">2.4.2.1</ecNumber>
    </recommendedName>
    <alternativeName>
        <fullName evidence="1">Purine nucleoside phosphorylase</fullName>
        <shortName evidence="1">PNP</shortName>
    </alternativeName>
</protein>
<comment type="function">
    <text evidence="1">Purine nucleoside phosphorylase which is highly specific for 6-oxopurine nucleosides. Cleaves guanosine or inosine to respective bases and sugar-1-phosphate molecules. Involved in purine salvage.</text>
</comment>
<comment type="catalytic activity">
    <reaction evidence="1">
        <text>a purine D-ribonucleoside + phosphate = a purine nucleobase + alpha-D-ribose 1-phosphate</text>
        <dbReference type="Rhea" id="RHEA:19805"/>
        <dbReference type="ChEBI" id="CHEBI:26386"/>
        <dbReference type="ChEBI" id="CHEBI:43474"/>
        <dbReference type="ChEBI" id="CHEBI:57720"/>
        <dbReference type="ChEBI" id="CHEBI:142355"/>
        <dbReference type="EC" id="2.4.2.1"/>
    </reaction>
</comment>
<comment type="pathway">
    <text evidence="1">Purine metabolism; purine nucleoside salvage.</text>
</comment>
<comment type="subunit">
    <text evidence="1">Homohexamer. Dimer of a homotrimer.</text>
</comment>
<comment type="miscellaneous">
    <text evidence="1">Although this enzyme belongs to the family of MTA phosphorylases based on sequence homology, it has been shown that conserved amino acid substitutions in the substrate binding pocket convert the substrate specificity of this enzyme from 6-aminopurines to 6-oxopurines.</text>
</comment>
<comment type="similarity">
    <text evidence="1">Belongs to the PNP/MTAP phosphorylase family. MTAP subfamily.</text>
</comment>
<accession>Q2RKL6</accession>
<dbReference type="EC" id="2.4.2.1" evidence="1"/>
<dbReference type="EMBL" id="CP000232">
    <property type="protein sequence ID" value="ABC19023.1"/>
    <property type="molecule type" value="Genomic_DNA"/>
</dbReference>
<dbReference type="RefSeq" id="YP_429566.1">
    <property type="nucleotide sequence ID" value="NC_007644.1"/>
</dbReference>
<dbReference type="SMR" id="Q2RKL6"/>
<dbReference type="STRING" id="264732.Moth_0705"/>
<dbReference type="EnsemblBacteria" id="ABC19023">
    <property type="protein sequence ID" value="ABC19023"/>
    <property type="gene ID" value="Moth_0705"/>
</dbReference>
<dbReference type="KEGG" id="mta:Moth_0705"/>
<dbReference type="PATRIC" id="fig|264732.11.peg.754"/>
<dbReference type="eggNOG" id="COG0005">
    <property type="taxonomic scope" value="Bacteria"/>
</dbReference>
<dbReference type="HOGENOM" id="CLU_054456_0_2_9"/>
<dbReference type="OrthoDB" id="1523230at2"/>
<dbReference type="UniPathway" id="UPA00606"/>
<dbReference type="GO" id="GO:0005829">
    <property type="term" value="C:cytosol"/>
    <property type="evidence" value="ECO:0007669"/>
    <property type="project" value="TreeGrafter"/>
</dbReference>
<dbReference type="GO" id="GO:0017061">
    <property type="term" value="F:S-methyl-5-thioadenosine phosphorylase activity"/>
    <property type="evidence" value="ECO:0007669"/>
    <property type="project" value="InterPro"/>
</dbReference>
<dbReference type="GO" id="GO:0019509">
    <property type="term" value="P:L-methionine salvage from methylthioadenosine"/>
    <property type="evidence" value="ECO:0007669"/>
    <property type="project" value="TreeGrafter"/>
</dbReference>
<dbReference type="GO" id="GO:0006166">
    <property type="term" value="P:purine ribonucleoside salvage"/>
    <property type="evidence" value="ECO:0007669"/>
    <property type="project" value="UniProtKB-UniRule"/>
</dbReference>
<dbReference type="CDD" id="cd09010">
    <property type="entry name" value="MTAP_SsMTAPII_like_MTIP"/>
    <property type="match status" value="1"/>
</dbReference>
<dbReference type="FunFam" id="3.40.50.1580:FF:000012">
    <property type="entry name" value="Probable 6-oxopurine nucleoside phosphorylase"/>
    <property type="match status" value="1"/>
</dbReference>
<dbReference type="Gene3D" id="3.40.50.1580">
    <property type="entry name" value="Nucleoside phosphorylase domain"/>
    <property type="match status" value="1"/>
</dbReference>
<dbReference type="HAMAP" id="MF_01963">
    <property type="entry name" value="MTAP"/>
    <property type="match status" value="1"/>
</dbReference>
<dbReference type="InterPro" id="IPR010044">
    <property type="entry name" value="MTAP"/>
</dbReference>
<dbReference type="InterPro" id="IPR000845">
    <property type="entry name" value="Nucleoside_phosphorylase_d"/>
</dbReference>
<dbReference type="InterPro" id="IPR035994">
    <property type="entry name" value="Nucleoside_phosphorylase_sf"/>
</dbReference>
<dbReference type="NCBIfam" id="TIGR01694">
    <property type="entry name" value="MTAP"/>
    <property type="match status" value="1"/>
</dbReference>
<dbReference type="NCBIfam" id="NF006599">
    <property type="entry name" value="PRK09136.1"/>
    <property type="match status" value="1"/>
</dbReference>
<dbReference type="PANTHER" id="PTHR42679">
    <property type="entry name" value="S-METHYL-5'-THIOADENOSINE PHOSPHORYLASE"/>
    <property type="match status" value="1"/>
</dbReference>
<dbReference type="PANTHER" id="PTHR42679:SF2">
    <property type="entry name" value="S-METHYL-5'-THIOADENOSINE PHOSPHORYLASE"/>
    <property type="match status" value="1"/>
</dbReference>
<dbReference type="Pfam" id="PF01048">
    <property type="entry name" value="PNP_UDP_1"/>
    <property type="match status" value="1"/>
</dbReference>
<dbReference type="SUPFAM" id="SSF53167">
    <property type="entry name" value="Purine and uridine phosphorylases"/>
    <property type="match status" value="1"/>
</dbReference>
<organism>
    <name type="scientific">Moorella thermoacetica (strain ATCC 39073 / JCM 9320)</name>
    <dbReference type="NCBI Taxonomy" id="264732"/>
    <lineage>
        <taxon>Bacteria</taxon>
        <taxon>Bacillati</taxon>
        <taxon>Bacillota</taxon>
        <taxon>Clostridia</taxon>
        <taxon>Moorellales</taxon>
        <taxon>Moorellaceae</taxon>
        <taxon>Moorella</taxon>
    </lineage>
</organism>
<feature type="chain" id="PRO_0000415082" description="Probable 6-oxopurine nucleoside phosphorylase">
    <location>
        <begin position="1"/>
        <end position="260"/>
    </location>
</feature>
<feature type="binding site" evidence="1">
    <location>
        <position position="9"/>
    </location>
    <ligand>
        <name>phosphate</name>
        <dbReference type="ChEBI" id="CHEBI:43474"/>
    </ligand>
</feature>
<feature type="binding site" evidence="1">
    <location>
        <begin position="49"/>
        <end position="50"/>
    </location>
    <ligand>
        <name>phosphate</name>
        <dbReference type="ChEBI" id="CHEBI:43474"/>
    </ligand>
</feature>
<feature type="binding site" evidence="1">
    <location>
        <position position="182"/>
    </location>
    <ligand>
        <name>substrate</name>
    </ligand>
</feature>
<feature type="binding site" evidence="1">
    <location>
        <position position="183"/>
    </location>
    <ligand>
        <name>phosphate</name>
        <dbReference type="ChEBI" id="CHEBI:43474"/>
    </ligand>
</feature>
<feature type="binding site" evidence="1">
    <location>
        <begin position="206"/>
        <end position="208"/>
    </location>
    <ligand>
        <name>substrate</name>
    </ligand>
</feature>
<feature type="site" description="Important for substrate specificity" evidence="1">
    <location>
        <position position="164"/>
    </location>
</feature>
<feature type="site" description="Important for substrate specificity" evidence="1">
    <location>
        <position position="218"/>
    </location>
</feature>
<gene>
    <name type="ordered locus">Moth_0705</name>
</gene>
<keyword id="KW-0328">Glycosyltransferase</keyword>
<keyword id="KW-0660">Purine salvage</keyword>
<keyword id="KW-0808">Transferase</keyword>
<proteinExistence type="inferred from homology"/>
<name>PNPH_MOOTA</name>